<evidence type="ECO:0000250" key="1"/>
<evidence type="ECO:0000305" key="2"/>
<name>XYLD_RHIME</name>
<keyword id="KW-0479">Metal-binding</keyword>
<keyword id="KW-0520">NAD</keyword>
<keyword id="KW-0560">Oxidoreductase</keyword>
<keyword id="KW-1185">Reference proteome</keyword>
<keyword id="KW-0862">Zinc</keyword>
<feature type="chain" id="PRO_0000160887" description="Putative D-xylulose reductase">
    <location>
        <begin position="1"/>
        <end position="346"/>
    </location>
</feature>
<feature type="binding site" evidence="1">
    <location>
        <position position="39"/>
    </location>
    <ligand>
        <name>Zn(2+)</name>
        <dbReference type="ChEBI" id="CHEBI:29105"/>
        <note>catalytic</note>
    </ligand>
</feature>
<feature type="binding site" evidence="1">
    <location>
        <position position="64"/>
    </location>
    <ligand>
        <name>Zn(2+)</name>
        <dbReference type="ChEBI" id="CHEBI:29105"/>
        <note>catalytic</note>
    </ligand>
</feature>
<feature type="binding site" evidence="1">
    <location>
        <position position="150"/>
    </location>
    <ligand>
        <name>Zn(2+)</name>
        <dbReference type="ChEBI" id="CHEBI:29105"/>
        <note>catalytic</note>
    </ligand>
</feature>
<accession>Q92MT4</accession>
<protein>
    <recommendedName>
        <fullName>Putative D-xylulose reductase</fullName>
        <ecNumber>1.1.1.9</ecNumber>
    </recommendedName>
    <alternativeName>
        <fullName>Xylitol dehydrogenase</fullName>
        <shortName>XDH</shortName>
    </alternativeName>
</protein>
<reference key="1">
    <citation type="journal article" date="2001" name="Proc. Natl. Acad. Sci. U.S.A.">
        <title>Analysis of the chromosome sequence of the legume symbiont Sinorhizobium meliloti strain 1021.</title>
        <authorList>
            <person name="Capela D."/>
            <person name="Barloy-Hubler F."/>
            <person name="Gouzy J."/>
            <person name="Bothe G."/>
            <person name="Ampe F."/>
            <person name="Batut J."/>
            <person name="Boistard P."/>
            <person name="Becker A."/>
            <person name="Boutry M."/>
            <person name="Cadieu E."/>
            <person name="Dreano S."/>
            <person name="Gloux S."/>
            <person name="Godrie T."/>
            <person name="Goffeau A."/>
            <person name="Kahn D."/>
            <person name="Kiss E."/>
            <person name="Lelaure V."/>
            <person name="Masuy D."/>
            <person name="Pohl T."/>
            <person name="Portetelle D."/>
            <person name="Puehler A."/>
            <person name="Purnelle B."/>
            <person name="Ramsperger U."/>
            <person name="Renard C."/>
            <person name="Thebault P."/>
            <person name="Vandenbol M."/>
            <person name="Weidner S."/>
            <person name="Galibert F."/>
        </authorList>
    </citation>
    <scope>NUCLEOTIDE SEQUENCE [LARGE SCALE GENOMIC DNA]</scope>
    <source>
        <strain>1021</strain>
    </source>
</reference>
<reference key="2">
    <citation type="journal article" date="2001" name="Science">
        <title>The composite genome of the legume symbiont Sinorhizobium meliloti.</title>
        <authorList>
            <person name="Galibert F."/>
            <person name="Finan T.M."/>
            <person name="Long S.R."/>
            <person name="Puehler A."/>
            <person name="Abola P."/>
            <person name="Ampe F."/>
            <person name="Barloy-Hubler F."/>
            <person name="Barnett M.J."/>
            <person name="Becker A."/>
            <person name="Boistard P."/>
            <person name="Bothe G."/>
            <person name="Boutry M."/>
            <person name="Bowser L."/>
            <person name="Buhrmester J."/>
            <person name="Cadieu E."/>
            <person name="Capela D."/>
            <person name="Chain P."/>
            <person name="Cowie A."/>
            <person name="Davis R.W."/>
            <person name="Dreano S."/>
            <person name="Federspiel N.A."/>
            <person name="Fisher R.F."/>
            <person name="Gloux S."/>
            <person name="Godrie T."/>
            <person name="Goffeau A."/>
            <person name="Golding B."/>
            <person name="Gouzy J."/>
            <person name="Gurjal M."/>
            <person name="Hernandez-Lucas I."/>
            <person name="Hong A."/>
            <person name="Huizar L."/>
            <person name="Hyman R.W."/>
            <person name="Jones T."/>
            <person name="Kahn D."/>
            <person name="Kahn M.L."/>
            <person name="Kalman S."/>
            <person name="Keating D.H."/>
            <person name="Kiss E."/>
            <person name="Komp C."/>
            <person name="Lelaure V."/>
            <person name="Masuy D."/>
            <person name="Palm C."/>
            <person name="Peck M.C."/>
            <person name="Pohl T.M."/>
            <person name="Portetelle D."/>
            <person name="Purnelle B."/>
            <person name="Ramsperger U."/>
            <person name="Surzycki R."/>
            <person name="Thebault P."/>
            <person name="Vandenbol M."/>
            <person name="Vorhoelter F.J."/>
            <person name="Weidner S."/>
            <person name="Wells D.H."/>
            <person name="Wong K."/>
            <person name="Yeh K.-C."/>
            <person name="Batut J."/>
        </authorList>
    </citation>
    <scope>NUCLEOTIDE SEQUENCE [LARGE SCALE GENOMIC DNA]</scope>
    <source>
        <strain>1021</strain>
    </source>
</reference>
<dbReference type="EC" id="1.1.1.9"/>
<dbReference type="EMBL" id="AL591688">
    <property type="protein sequence ID" value="CAC47105.1"/>
    <property type="molecule type" value="Genomic_DNA"/>
</dbReference>
<dbReference type="RefSeq" id="NP_386632.1">
    <property type="nucleotide sequence ID" value="NC_003047.1"/>
</dbReference>
<dbReference type="RefSeq" id="WP_010969998.1">
    <property type="nucleotide sequence ID" value="NC_003047.1"/>
</dbReference>
<dbReference type="SMR" id="Q92MT4"/>
<dbReference type="EnsemblBacteria" id="CAC47105">
    <property type="protein sequence ID" value="CAC47105"/>
    <property type="gene ID" value="SMc01992"/>
</dbReference>
<dbReference type="KEGG" id="sme:SMc01992"/>
<dbReference type="PATRIC" id="fig|266834.11.peg.4020"/>
<dbReference type="eggNOG" id="COG1063">
    <property type="taxonomic scope" value="Bacteria"/>
</dbReference>
<dbReference type="HOGENOM" id="CLU_026673_11_5_5"/>
<dbReference type="OrthoDB" id="9809185at2"/>
<dbReference type="Proteomes" id="UP000001976">
    <property type="component" value="Chromosome"/>
</dbReference>
<dbReference type="GO" id="GO:0046526">
    <property type="term" value="F:D-xylulose reductase activity"/>
    <property type="evidence" value="ECO:0007669"/>
    <property type="project" value="UniProtKB-EC"/>
</dbReference>
<dbReference type="GO" id="GO:0008270">
    <property type="term" value="F:zinc ion binding"/>
    <property type="evidence" value="ECO:0007669"/>
    <property type="project" value="InterPro"/>
</dbReference>
<dbReference type="CDD" id="cd05285">
    <property type="entry name" value="sorbitol_DH"/>
    <property type="match status" value="1"/>
</dbReference>
<dbReference type="Gene3D" id="3.90.180.10">
    <property type="entry name" value="Medium-chain alcohol dehydrogenases, catalytic domain"/>
    <property type="match status" value="1"/>
</dbReference>
<dbReference type="Gene3D" id="3.40.50.720">
    <property type="entry name" value="NAD(P)-binding Rossmann-like Domain"/>
    <property type="match status" value="1"/>
</dbReference>
<dbReference type="InterPro" id="IPR013149">
    <property type="entry name" value="ADH-like_C"/>
</dbReference>
<dbReference type="InterPro" id="IPR013154">
    <property type="entry name" value="ADH-like_N"/>
</dbReference>
<dbReference type="InterPro" id="IPR002328">
    <property type="entry name" value="ADH_Zn_CS"/>
</dbReference>
<dbReference type="InterPro" id="IPR011032">
    <property type="entry name" value="GroES-like_sf"/>
</dbReference>
<dbReference type="InterPro" id="IPR036291">
    <property type="entry name" value="NAD(P)-bd_dom_sf"/>
</dbReference>
<dbReference type="InterPro" id="IPR020843">
    <property type="entry name" value="PKS_ER"/>
</dbReference>
<dbReference type="InterPro" id="IPR045306">
    <property type="entry name" value="SDH-like"/>
</dbReference>
<dbReference type="PANTHER" id="PTHR43161">
    <property type="entry name" value="SORBITOL DEHYDROGENASE"/>
    <property type="match status" value="1"/>
</dbReference>
<dbReference type="PANTHER" id="PTHR43161:SF9">
    <property type="entry name" value="SORBITOL DEHYDROGENASE"/>
    <property type="match status" value="1"/>
</dbReference>
<dbReference type="Pfam" id="PF08240">
    <property type="entry name" value="ADH_N"/>
    <property type="match status" value="1"/>
</dbReference>
<dbReference type="Pfam" id="PF00107">
    <property type="entry name" value="ADH_zinc_N"/>
    <property type="match status" value="1"/>
</dbReference>
<dbReference type="SMART" id="SM00829">
    <property type="entry name" value="PKS_ER"/>
    <property type="match status" value="1"/>
</dbReference>
<dbReference type="SUPFAM" id="SSF50129">
    <property type="entry name" value="GroES-like"/>
    <property type="match status" value="1"/>
</dbReference>
<dbReference type="SUPFAM" id="SSF51735">
    <property type="entry name" value="NAD(P)-binding Rossmann-fold domains"/>
    <property type="match status" value="1"/>
</dbReference>
<dbReference type="PROSITE" id="PS00059">
    <property type="entry name" value="ADH_ZINC"/>
    <property type="match status" value="1"/>
</dbReference>
<organism>
    <name type="scientific">Rhizobium meliloti (strain 1021)</name>
    <name type="common">Ensifer meliloti</name>
    <name type="synonym">Sinorhizobium meliloti</name>
    <dbReference type="NCBI Taxonomy" id="266834"/>
    <lineage>
        <taxon>Bacteria</taxon>
        <taxon>Pseudomonadati</taxon>
        <taxon>Pseudomonadota</taxon>
        <taxon>Alphaproteobacteria</taxon>
        <taxon>Hyphomicrobiales</taxon>
        <taxon>Rhizobiaceae</taxon>
        <taxon>Sinorhizobium/Ensifer group</taxon>
        <taxon>Sinorhizobium</taxon>
    </lineage>
</organism>
<comment type="catalytic activity">
    <reaction>
        <text>xylitol + NAD(+) = D-xylulose + NADH + H(+)</text>
        <dbReference type="Rhea" id="RHEA:20433"/>
        <dbReference type="ChEBI" id="CHEBI:15378"/>
        <dbReference type="ChEBI" id="CHEBI:17140"/>
        <dbReference type="ChEBI" id="CHEBI:17151"/>
        <dbReference type="ChEBI" id="CHEBI:57540"/>
        <dbReference type="ChEBI" id="CHEBI:57945"/>
        <dbReference type="EC" id="1.1.1.9"/>
    </reaction>
</comment>
<comment type="cofactor">
    <cofactor evidence="1">
        <name>Zn(2+)</name>
        <dbReference type="ChEBI" id="CHEBI:29105"/>
    </cofactor>
    <text evidence="1">Binds 1 zinc ion per subunit.</text>
</comment>
<comment type="similarity">
    <text evidence="2">Belongs to the zinc-containing alcohol dehydrogenase family.</text>
</comment>
<gene>
    <name type="ordered locus">R02526</name>
    <name type="ORF">SMc01992</name>
</gene>
<proteinExistence type="inferred from homology"/>
<sequence length="346" mass="36463">MAKALVLEKKGQLSLRDIPVRRDLSPTDVLIGIRTVGVCGSDVHYYTHGKIGPFVVNEPMILGHEAAGVVLEVGSQVRHLKKGDRVCMEPGIPDLSSRSSKLGIYNVDPSVRFWATPPVHGCLTPEVVHPAAFTYRLPDHVSFAEGAMVEPFAIGVQAALRAGIRPGDVGAVMGAGPIGMMTALAALAGGCSKVYVADLAQPKLDVIGAYEGIETINVRQQAVSEALAGATGGWGADVVFECSGAAPAILALPSLARPGGTVVLVGMPVEPVPFDIVGMQAKELRIETVFRYANVYDRAIELIASGKVDLKPLISATIPFDESIAAFDRAVEARPTDVKIQIEMPA</sequence>